<name>MNMG_STUS1</name>
<gene>
    <name evidence="1" type="primary">mnmG</name>
    <name evidence="1" type="synonym">gidA</name>
    <name type="ordered locus">PST_4202</name>
</gene>
<protein>
    <recommendedName>
        <fullName evidence="1">tRNA uridine 5-carboxymethylaminomethyl modification enzyme MnmG</fullName>
    </recommendedName>
    <alternativeName>
        <fullName evidence="1">Glucose-inhibited division protein A</fullName>
    </alternativeName>
</protein>
<evidence type="ECO:0000255" key="1">
    <source>
        <dbReference type="HAMAP-Rule" id="MF_00129"/>
    </source>
</evidence>
<comment type="function">
    <text evidence="1">NAD-binding protein involved in the addition of a carboxymethylaminomethyl (cmnm) group at the wobble position (U34) of certain tRNAs, forming tRNA-cmnm(5)s(2)U34.</text>
</comment>
<comment type="cofactor">
    <cofactor evidence="1">
        <name>FAD</name>
        <dbReference type="ChEBI" id="CHEBI:57692"/>
    </cofactor>
</comment>
<comment type="subunit">
    <text evidence="1">Homodimer. Heterotetramer of two MnmE and two MnmG subunits.</text>
</comment>
<comment type="subcellular location">
    <subcellularLocation>
        <location evidence="1">Cytoplasm</location>
    </subcellularLocation>
</comment>
<comment type="similarity">
    <text evidence="1">Belongs to the MnmG family.</text>
</comment>
<dbReference type="EMBL" id="CP000304">
    <property type="protein sequence ID" value="ABP81824.1"/>
    <property type="molecule type" value="Genomic_DNA"/>
</dbReference>
<dbReference type="RefSeq" id="WP_011915201.1">
    <property type="nucleotide sequence ID" value="NC_009434.1"/>
</dbReference>
<dbReference type="SMR" id="A4VS73"/>
<dbReference type="KEGG" id="psa:PST_4202"/>
<dbReference type="eggNOG" id="COG0445">
    <property type="taxonomic scope" value="Bacteria"/>
</dbReference>
<dbReference type="HOGENOM" id="CLU_007831_2_2_6"/>
<dbReference type="Proteomes" id="UP000000233">
    <property type="component" value="Chromosome"/>
</dbReference>
<dbReference type="GO" id="GO:0005829">
    <property type="term" value="C:cytosol"/>
    <property type="evidence" value="ECO:0007669"/>
    <property type="project" value="TreeGrafter"/>
</dbReference>
<dbReference type="GO" id="GO:0050660">
    <property type="term" value="F:flavin adenine dinucleotide binding"/>
    <property type="evidence" value="ECO:0007669"/>
    <property type="project" value="UniProtKB-UniRule"/>
</dbReference>
<dbReference type="GO" id="GO:0030488">
    <property type="term" value="P:tRNA methylation"/>
    <property type="evidence" value="ECO:0007669"/>
    <property type="project" value="TreeGrafter"/>
</dbReference>
<dbReference type="GO" id="GO:0002098">
    <property type="term" value="P:tRNA wobble uridine modification"/>
    <property type="evidence" value="ECO:0007669"/>
    <property type="project" value="InterPro"/>
</dbReference>
<dbReference type="FunFam" id="1.10.10.1800:FF:000001">
    <property type="entry name" value="tRNA uridine 5-carboxymethylaminomethyl modification enzyme MnmG"/>
    <property type="match status" value="1"/>
</dbReference>
<dbReference type="FunFam" id="1.10.150.570:FF:000001">
    <property type="entry name" value="tRNA uridine 5-carboxymethylaminomethyl modification enzyme MnmG"/>
    <property type="match status" value="1"/>
</dbReference>
<dbReference type="FunFam" id="3.50.50.60:FF:000002">
    <property type="entry name" value="tRNA uridine 5-carboxymethylaminomethyl modification enzyme MnmG"/>
    <property type="match status" value="1"/>
</dbReference>
<dbReference type="FunFam" id="3.50.50.60:FF:000010">
    <property type="entry name" value="tRNA uridine 5-carboxymethylaminomethyl modification enzyme MnmG"/>
    <property type="match status" value="1"/>
</dbReference>
<dbReference type="Gene3D" id="3.50.50.60">
    <property type="entry name" value="FAD/NAD(P)-binding domain"/>
    <property type="match status" value="2"/>
</dbReference>
<dbReference type="Gene3D" id="1.10.150.570">
    <property type="entry name" value="GidA associated domain, C-terminal subdomain"/>
    <property type="match status" value="1"/>
</dbReference>
<dbReference type="Gene3D" id="1.10.10.1800">
    <property type="entry name" value="tRNA uridine 5-carboxymethylaminomethyl modification enzyme MnmG/GidA"/>
    <property type="match status" value="1"/>
</dbReference>
<dbReference type="HAMAP" id="MF_00129">
    <property type="entry name" value="MnmG_GidA"/>
    <property type="match status" value="1"/>
</dbReference>
<dbReference type="InterPro" id="IPR036188">
    <property type="entry name" value="FAD/NAD-bd_sf"/>
</dbReference>
<dbReference type="InterPro" id="IPR049312">
    <property type="entry name" value="GIDA_C_N"/>
</dbReference>
<dbReference type="InterPro" id="IPR004416">
    <property type="entry name" value="MnmG"/>
</dbReference>
<dbReference type="InterPro" id="IPR002218">
    <property type="entry name" value="MnmG-rel"/>
</dbReference>
<dbReference type="InterPro" id="IPR020595">
    <property type="entry name" value="MnmG-rel_CS"/>
</dbReference>
<dbReference type="InterPro" id="IPR026904">
    <property type="entry name" value="MnmG_C"/>
</dbReference>
<dbReference type="InterPro" id="IPR047001">
    <property type="entry name" value="MnmG_C_subdom"/>
</dbReference>
<dbReference type="InterPro" id="IPR044920">
    <property type="entry name" value="MnmG_C_subdom_sf"/>
</dbReference>
<dbReference type="InterPro" id="IPR040131">
    <property type="entry name" value="MnmG_N"/>
</dbReference>
<dbReference type="NCBIfam" id="TIGR00136">
    <property type="entry name" value="mnmG_gidA"/>
    <property type="match status" value="1"/>
</dbReference>
<dbReference type="PANTHER" id="PTHR11806">
    <property type="entry name" value="GLUCOSE INHIBITED DIVISION PROTEIN A"/>
    <property type="match status" value="1"/>
</dbReference>
<dbReference type="PANTHER" id="PTHR11806:SF0">
    <property type="entry name" value="PROTEIN MTO1 HOMOLOG, MITOCHONDRIAL"/>
    <property type="match status" value="1"/>
</dbReference>
<dbReference type="Pfam" id="PF01134">
    <property type="entry name" value="GIDA"/>
    <property type="match status" value="1"/>
</dbReference>
<dbReference type="Pfam" id="PF21680">
    <property type="entry name" value="GIDA_C_1st"/>
    <property type="match status" value="1"/>
</dbReference>
<dbReference type="Pfam" id="PF13932">
    <property type="entry name" value="SAM_GIDA_C"/>
    <property type="match status" value="1"/>
</dbReference>
<dbReference type="SMART" id="SM01228">
    <property type="entry name" value="GIDA_assoc_3"/>
    <property type="match status" value="1"/>
</dbReference>
<dbReference type="SUPFAM" id="SSF51905">
    <property type="entry name" value="FAD/NAD(P)-binding domain"/>
    <property type="match status" value="1"/>
</dbReference>
<dbReference type="PROSITE" id="PS01280">
    <property type="entry name" value="GIDA_1"/>
    <property type="match status" value="1"/>
</dbReference>
<dbReference type="PROSITE" id="PS01281">
    <property type="entry name" value="GIDA_2"/>
    <property type="match status" value="1"/>
</dbReference>
<proteinExistence type="inferred from homology"/>
<sequence>MDFPSRFDVIVIGGGHAGTEAALAAARMGVKTLLLTHNVETLGQMSCNPAIGGIGKSHLVKEIDALGGAMAVATDKGGIQFRVLNSRKGPAVRATRAQADRVLYKAAIRELLENQPNLWIFQQAADDLIVEQNEVRGVVTQMGLRFLATSVVLTTGTFLGGLIHIGLQNYSGGRAGDPPSIALAKRLRELPLRVGRLKTGTPPRIDGRSVDFSQMTEQPGDTPLPVMSFLGSREQHPPQVSCWITHTNARTHEIIAANLDRSPMYSGVIEGVGPRYCPSIEDKIHRFADKDSHQVFLEPEGLTTHELYPNGISTSLPFDVQLQIVQSIRGMENAHIVRPGYAIEYDYFDPRDLKYSLETKVIGGLFFAGQINGTTGYEEAGAQGLLAGANAALRAQGKDSWCPRRDEAYLGVLVDDLITLGTQEPYRMFTSRAEYRLILREDNADLRLTEKGRELGLVDDARWAAFCAKREGIEREEQRLKNSWVRPGTPQGDAIAERFGSPLAREYNLLNLLARPEIDYQSLIELTGPGEPDPQVAEQVEIKTKYAGYIERQQDEIEKLRASENVALPADLDYATISGLSKEIQHKLGQARPQTLGQASRIPGVTPAAVSLLMIHLKKRSAGQQLEQSA</sequence>
<organism>
    <name type="scientific">Stutzerimonas stutzeri (strain A1501)</name>
    <name type="common">Pseudomonas stutzeri</name>
    <dbReference type="NCBI Taxonomy" id="379731"/>
    <lineage>
        <taxon>Bacteria</taxon>
        <taxon>Pseudomonadati</taxon>
        <taxon>Pseudomonadota</taxon>
        <taxon>Gammaproteobacteria</taxon>
        <taxon>Pseudomonadales</taxon>
        <taxon>Pseudomonadaceae</taxon>
        <taxon>Stutzerimonas</taxon>
    </lineage>
</organism>
<feature type="chain" id="PRO_1000016650" description="tRNA uridine 5-carboxymethylaminomethyl modification enzyme MnmG">
    <location>
        <begin position="1"/>
        <end position="630"/>
    </location>
</feature>
<feature type="binding site" evidence="1">
    <location>
        <begin position="13"/>
        <end position="18"/>
    </location>
    <ligand>
        <name>FAD</name>
        <dbReference type="ChEBI" id="CHEBI:57692"/>
    </ligand>
</feature>
<feature type="binding site" evidence="1">
    <location>
        <begin position="273"/>
        <end position="287"/>
    </location>
    <ligand>
        <name>NAD(+)</name>
        <dbReference type="ChEBI" id="CHEBI:57540"/>
    </ligand>
</feature>
<reference key="1">
    <citation type="journal article" date="2008" name="Proc. Natl. Acad. Sci. U.S.A.">
        <title>Nitrogen fixation island and rhizosphere competence traits in the genome of root-associated Pseudomonas stutzeri A1501.</title>
        <authorList>
            <person name="Yan Y."/>
            <person name="Yang J."/>
            <person name="Dou Y."/>
            <person name="Chen M."/>
            <person name="Ping S."/>
            <person name="Peng J."/>
            <person name="Lu W."/>
            <person name="Zhang W."/>
            <person name="Yao Z."/>
            <person name="Li H."/>
            <person name="Liu W."/>
            <person name="He S."/>
            <person name="Geng L."/>
            <person name="Zhang X."/>
            <person name="Yang F."/>
            <person name="Yu H."/>
            <person name="Zhan Y."/>
            <person name="Li D."/>
            <person name="Lin Z."/>
            <person name="Wang Y."/>
            <person name="Elmerich C."/>
            <person name="Lin M."/>
            <person name="Jin Q."/>
        </authorList>
    </citation>
    <scope>NUCLEOTIDE SEQUENCE [LARGE SCALE GENOMIC DNA]</scope>
    <source>
        <strain>A1501</strain>
    </source>
</reference>
<accession>A4VS73</accession>
<keyword id="KW-0963">Cytoplasm</keyword>
<keyword id="KW-0274">FAD</keyword>
<keyword id="KW-0285">Flavoprotein</keyword>
<keyword id="KW-0520">NAD</keyword>
<keyword id="KW-1185">Reference proteome</keyword>
<keyword id="KW-0819">tRNA processing</keyword>